<organism>
    <name type="scientific">Enterobacteria phage T4</name>
    <name type="common">Bacteriophage T4</name>
    <dbReference type="NCBI Taxonomy" id="10665"/>
    <lineage>
        <taxon>Viruses</taxon>
        <taxon>Duplodnaviria</taxon>
        <taxon>Heunggongvirae</taxon>
        <taxon>Uroviricota</taxon>
        <taxon>Caudoviricetes</taxon>
        <taxon>Straboviridae</taxon>
        <taxon>Tevenvirinae</taxon>
        <taxon>Tequatrovirus</taxon>
    </lineage>
</organism>
<organismHost>
    <name type="scientific">Escherichia coli</name>
    <dbReference type="NCBI Taxonomy" id="562"/>
</organismHost>
<reference key="1">
    <citation type="journal article" date="1990" name="Mol. Microbiol.">
        <title>Nucleotide sequence and control of transcription of the bacteriophage T4 motA regulatory gene.</title>
        <authorList>
            <person name="Uzan M."/>
            <person name="Brody E."/>
            <person name="Favre R."/>
        </authorList>
    </citation>
    <scope>NUCLEOTIDE SEQUENCE [GENOMIC DNA]</scope>
    <scope>MUTAGENESIS OF ALA-140</scope>
</reference>
<reference key="2">
    <citation type="journal article" date="2003" name="Microbiol. Mol. Biol. Rev.">
        <title>Bacteriophage T4 genome.</title>
        <authorList>
            <person name="Miller E.S."/>
            <person name="Kutter E."/>
            <person name="Mosig G."/>
            <person name="Arisaka F."/>
            <person name="Kunisawa T."/>
            <person name="Ruger W."/>
        </authorList>
    </citation>
    <scope>NUCLEOTIDE SEQUENCE [LARGE SCALE GENOMIC DNA]</scope>
</reference>
<reference key="3">
    <citation type="journal article" date="1997" name="EMBO J.">
        <title>The activation domain of the MotA transcription factor from bacteriophage T4.</title>
        <authorList>
            <person name="Finnin M.S."/>
            <person name="Cicero M.P."/>
            <person name="Davies C."/>
            <person name="Porter S.J."/>
            <person name="White S.W."/>
            <person name="Kreuzer K.N."/>
        </authorList>
    </citation>
    <scope>X-RAY CRYSTALLOGRAPHY (2.19 ANGSTROMS) OF 2-96</scope>
</reference>
<protein>
    <recommendedName>
        <fullName>Middle transcription regulatory protein motA</fullName>
    </recommendedName>
</protein>
<sequence length="211" mass="23574">MSKVTYIIKASNDVLNEKTATILITIAKKDFITAAEVREVHPDLGNAVVNSNIGVLIKKGLVEKSGDGLIITGEAQDIISNAATLYAQENAPELLKKRATRKAREITSDMEEDKDLMLKLLDKNGFVLKKVEIYRSNYLAILEKRTNGIRNFEINNNGNMRIFGYKMMEHHIQKFTDIGMSCKIAKNGNVYLDIKRSAENIEAVITVASEL</sequence>
<dbReference type="EMBL" id="Z48569">
    <property type="protein sequence ID" value="CAA88453.1"/>
    <property type="molecule type" value="Genomic_DNA"/>
</dbReference>
<dbReference type="EMBL" id="AF158101">
    <property type="protein sequence ID" value="AAD42607.1"/>
    <property type="molecule type" value="Genomic_DNA"/>
</dbReference>
<dbReference type="PIR" id="JV0101">
    <property type="entry name" value="ZKBPT4"/>
</dbReference>
<dbReference type="RefSeq" id="NP_049873.1">
    <property type="nucleotide sequence ID" value="NC_000866.4"/>
</dbReference>
<dbReference type="PDB" id="1BJA">
    <property type="method" value="X-ray"/>
    <property type="resolution" value="2.19 A"/>
    <property type="chains" value="A/B=2-96"/>
</dbReference>
<dbReference type="PDB" id="1I1S">
    <property type="method" value="NMR"/>
    <property type="chains" value="A=1-96"/>
</dbReference>
<dbReference type="PDB" id="1KAF">
    <property type="method" value="X-ray"/>
    <property type="resolution" value="1.60 A"/>
    <property type="chains" value="A/B/C/D/E/F=105-211"/>
</dbReference>
<dbReference type="PDB" id="5JLT">
    <property type="method" value="X-ray"/>
    <property type="resolution" value="2.96 A"/>
    <property type="chains" value="A/B/C/D=93-211"/>
</dbReference>
<dbReference type="PDB" id="6K4Y">
    <property type="method" value="EM"/>
    <property type="resolution" value="3.79 A"/>
    <property type="chains" value="M=1-211"/>
</dbReference>
<dbReference type="PDBsum" id="1BJA"/>
<dbReference type="PDBsum" id="1I1S"/>
<dbReference type="PDBsum" id="1KAF"/>
<dbReference type="PDBsum" id="5JLT"/>
<dbReference type="PDBsum" id="6K4Y"/>
<dbReference type="BMRB" id="P22915"/>
<dbReference type="EMDB" id="EMD-9916"/>
<dbReference type="SMR" id="P22915"/>
<dbReference type="GeneID" id="1258740"/>
<dbReference type="KEGG" id="vg:1258740"/>
<dbReference type="OrthoDB" id="9294at10239"/>
<dbReference type="EvolutionaryTrace" id="P22915"/>
<dbReference type="Proteomes" id="UP000009087">
    <property type="component" value="Segment"/>
</dbReference>
<dbReference type="GO" id="GO:0003677">
    <property type="term" value="F:DNA binding"/>
    <property type="evidence" value="ECO:0007669"/>
    <property type="project" value="UniProtKB-KW"/>
</dbReference>
<dbReference type="Gene3D" id="3.90.1150.20">
    <property type="entry name" value="Transcription regulator MotA, C-terminal domain"/>
    <property type="match status" value="1"/>
</dbReference>
<dbReference type="Gene3D" id="1.10.10.10">
    <property type="entry name" value="Winged helix-like DNA-binding domain superfamily/Winged helix DNA-binding domain"/>
    <property type="match status" value="1"/>
</dbReference>
<dbReference type="InterPro" id="IPR015241">
    <property type="entry name" value="MotA_Tscrpt_reg_C"/>
</dbReference>
<dbReference type="InterPro" id="IPR036474">
    <property type="entry name" value="MotA_Tscrpt_reg_C_sf"/>
</dbReference>
<dbReference type="InterPro" id="IPR015198">
    <property type="entry name" value="Phage_T4_MotA_Tscrpt_reg_N"/>
</dbReference>
<dbReference type="InterPro" id="IPR036388">
    <property type="entry name" value="WH-like_DNA-bd_sf"/>
</dbReference>
<dbReference type="InterPro" id="IPR036390">
    <property type="entry name" value="WH_DNA-bd_sf"/>
</dbReference>
<dbReference type="Pfam" id="PF09114">
    <property type="entry name" value="MotA_activ"/>
    <property type="match status" value="1"/>
</dbReference>
<dbReference type="Pfam" id="PF09158">
    <property type="entry name" value="MotCF"/>
    <property type="match status" value="1"/>
</dbReference>
<dbReference type="SUPFAM" id="SSF69652">
    <property type="entry name" value="DNA-binding C-terminal domain of the transcription factor MotA"/>
    <property type="match status" value="1"/>
</dbReference>
<dbReference type="SUPFAM" id="SSF46785">
    <property type="entry name" value="Winged helix' DNA-binding domain"/>
    <property type="match status" value="1"/>
</dbReference>
<name>MOTA_BPT4</name>
<evidence type="ECO:0000250" key="1"/>
<evidence type="ECO:0000269" key="2">
    <source>
    </source>
</evidence>
<evidence type="ECO:0007829" key="3">
    <source>
        <dbReference type="PDB" id="1BJA"/>
    </source>
</evidence>
<evidence type="ECO:0007829" key="4">
    <source>
        <dbReference type="PDB" id="1I1S"/>
    </source>
</evidence>
<evidence type="ECO:0007829" key="5">
    <source>
        <dbReference type="PDB" id="1KAF"/>
    </source>
</evidence>
<comment type="function">
    <text>Required for the transcriptional activation of middle promoters. Middle promoters are characterized by the presence of the conserved sequence [AT]3TGCTTNA (MotA box). MotA binds directly to MotA boxes.</text>
</comment>
<comment type="miscellaneous">
    <text>MotA synthesis starts immediately after infection and stops abruptly some 4-5 minutes later.</text>
</comment>
<gene>
    <name type="primary">motA</name>
</gene>
<accession>P22915</accession>
<proteinExistence type="evidence at protein level"/>
<feature type="chain" id="PRO_0000164956" description="Middle transcription regulatory protein motA">
    <location>
        <begin position="1"/>
        <end position="211"/>
    </location>
</feature>
<feature type="DNA-binding region" description="H-T-H motif" evidence="1">
    <location>
        <begin position="23"/>
        <end position="42"/>
    </location>
</feature>
<feature type="mutagenesis site" description="Temperature-sensitive." evidence="2">
    <original>A</original>
    <variation>D</variation>
    <location>
        <position position="140"/>
    </location>
</feature>
<feature type="helix" evidence="3">
    <location>
        <begin position="4"/>
        <end position="10"/>
    </location>
</feature>
<feature type="turn" evidence="3">
    <location>
        <begin position="11"/>
        <end position="13"/>
    </location>
</feature>
<feature type="helix" evidence="3">
    <location>
        <begin position="17"/>
        <end position="28"/>
    </location>
</feature>
<feature type="helix" evidence="3">
    <location>
        <begin position="34"/>
        <end position="39"/>
    </location>
</feature>
<feature type="strand" evidence="4">
    <location>
        <begin position="42"/>
        <end position="44"/>
    </location>
</feature>
<feature type="helix" evidence="3">
    <location>
        <begin position="46"/>
        <end position="57"/>
    </location>
</feature>
<feature type="turn" evidence="3">
    <location>
        <begin position="58"/>
        <end position="60"/>
    </location>
</feature>
<feature type="strand" evidence="3">
    <location>
        <begin position="61"/>
        <end position="65"/>
    </location>
</feature>
<feature type="strand" evidence="3">
    <location>
        <begin position="68"/>
        <end position="71"/>
    </location>
</feature>
<feature type="helix" evidence="3">
    <location>
        <begin position="73"/>
        <end position="89"/>
    </location>
</feature>
<feature type="helix" evidence="3">
    <location>
        <begin position="91"/>
        <end position="94"/>
    </location>
</feature>
<feature type="helix" evidence="5">
    <location>
        <begin position="108"/>
        <end position="123"/>
    </location>
</feature>
<feature type="strand" evidence="5">
    <location>
        <begin position="128"/>
        <end position="134"/>
    </location>
</feature>
<feature type="strand" evidence="5">
    <location>
        <begin position="137"/>
        <end position="146"/>
    </location>
</feature>
<feature type="strand" evidence="5">
    <location>
        <begin position="149"/>
        <end position="154"/>
    </location>
</feature>
<feature type="strand" evidence="5">
    <location>
        <begin position="158"/>
        <end position="166"/>
    </location>
</feature>
<feature type="helix" evidence="5">
    <location>
        <begin position="169"/>
        <end position="176"/>
    </location>
</feature>
<feature type="turn" evidence="5">
    <location>
        <begin position="177"/>
        <end position="179"/>
    </location>
</feature>
<feature type="strand" evidence="5">
    <location>
        <begin position="181"/>
        <end position="184"/>
    </location>
</feature>
<feature type="strand" evidence="5">
    <location>
        <begin position="188"/>
        <end position="195"/>
    </location>
</feature>
<feature type="helix" evidence="5">
    <location>
        <begin position="198"/>
        <end position="209"/>
    </location>
</feature>
<keyword id="KW-0002">3D-structure</keyword>
<keyword id="KW-0010">Activator</keyword>
<keyword id="KW-0238">DNA-binding</keyword>
<keyword id="KW-1185">Reference proteome</keyword>
<keyword id="KW-0804">Transcription</keyword>
<keyword id="KW-0805">Transcription regulation</keyword>